<comment type="function">
    <text evidence="1">May help in the organization of the PsaL subunit.</text>
</comment>
<comment type="subcellular location">
    <subcellularLocation>
        <location evidence="1">Plastid</location>
        <location evidence="1">Chloroplast thylakoid membrane</location>
        <topology evidence="1">Single-pass membrane protein</topology>
    </subcellularLocation>
</comment>
<comment type="similarity">
    <text evidence="1">Belongs to the PsaI family.</text>
</comment>
<dbReference type="EMBL" id="EF115543">
    <property type="protein sequence ID" value="ABK79590.1"/>
    <property type="molecule type" value="Genomic_DNA"/>
</dbReference>
<dbReference type="RefSeq" id="YP_874746.1">
    <property type="nucleotide sequence ID" value="NC_008591.1"/>
</dbReference>
<dbReference type="SMR" id="A1EA18"/>
<dbReference type="GeneID" id="4524988"/>
<dbReference type="GO" id="GO:0009535">
    <property type="term" value="C:chloroplast thylakoid membrane"/>
    <property type="evidence" value="ECO:0007669"/>
    <property type="project" value="UniProtKB-SubCell"/>
</dbReference>
<dbReference type="GO" id="GO:0009522">
    <property type="term" value="C:photosystem I"/>
    <property type="evidence" value="ECO:0007669"/>
    <property type="project" value="UniProtKB-KW"/>
</dbReference>
<dbReference type="GO" id="GO:0015979">
    <property type="term" value="P:photosynthesis"/>
    <property type="evidence" value="ECO:0007669"/>
    <property type="project" value="UniProtKB-UniRule"/>
</dbReference>
<dbReference type="HAMAP" id="MF_00431">
    <property type="entry name" value="PSI_PsaI"/>
    <property type="match status" value="1"/>
</dbReference>
<dbReference type="InterPro" id="IPR001302">
    <property type="entry name" value="PSI_PsaI"/>
</dbReference>
<dbReference type="InterPro" id="IPR036357">
    <property type="entry name" value="PSI_PsaI_sf"/>
</dbReference>
<dbReference type="NCBIfam" id="TIGR03052">
    <property type="entry name" value="PS_I_psaI"/>
    <property type="match status" value="1"/>
</dbReference>
<dbReference type="PANTHER" id="PTHR35775">
    <property type="match status" value="1"/>
</dbReference>
<dbReference type="PANTHER" id="PTHR35775:SF2">
    <property type="entry name" value="PHOTOSYSTEM I REACTION CENTER SUBUNIT VIII"/>
    <property type="match status" value="1"/>
</dbReference>
<dbReference type="Pfam" id="PF00796">
    <property type="entry name" value="PSI_8"/>
    <property type="match status" value="1"/>
</dbReference>
<dbReference type="SUPFAM" id="SSF81540">
    <property type="entry name" value="Subunit VIII of photosystem I reaction centre, PsaI"/>
    <property type="match status" value="1"/>
</dbReference>
<protein>
    <recommendedName>
        <fullName evidence="1">Photosystem I reaction center subunit VIII</fullName>
        <shortName evidence="1">PSI-I</shortName>
    </recommendedName>
</protein>
<sequence>MTDLNLPSIFVPLVGLVFPAIAMTSLFLYVQKNKIV</sequence>
<name>PSAI_AGRST</name>
<evidence type="ECO:0000255" key="1">
    <source>
        <dbReference type="HAMAP-Rule" id="MF_00431"/>
    </source>
</evidence>
<gene>
    <name evidence="1" type="primary">psaI</name>
</gene>
<geneLocation type="chloroplast"/>
<accession>A1EA18</accession>
<feature type="chain" id="PRO_0000276013" description="Photosystem I reaction center subunit VIII">
    <location>
        <begin position="1"/>
        <end position="36"/>
    </location>
</feature>
<feature type="transmembrane region" description="Helical" evidence="1">
    <location>
        <begin position="9"/>
        <end position="29"/>
    </location>
</feature>
<proteinExistence type="inferred from homology"/>
<keyword id="KW-0150">Chloroplast</keyword>
<keyword id="KW-0472">Membrane</keyword>
<keyword id="KW-0602">Photosynthesis</keyword>
<keyword id="KW-0603">Photosystem I</keyword>
<keyword id="KW-0934">Plastid</keyword>
<keyword id="KW-0793">Thylakoid</keyword>
<keyword id="KW-0812">Transmembrane</keyword>
<keyword id="KW-1133">Transmembrane helix</keyword>
<reference key="1">
    <citation type="journal article" date="2007" name="Theor. Appl. Genet.">
        <title>Complete chloroplast genome sequences of Hordeum vulgare, Sorghum bicolor and Agrostis stolonifera, and comparative analyses with other grass genomes.</title>
        <authorList>
            <person name="Saski C."/>
            <person name="Lee S.-B."/>
            <person name="Fjellheim S."/>
            <person name="Guda C."/>
            <person name="Jansen R.K."/>
            <person name="Luo H."/>
            <person name="Tomkins J."/>
            <person name="Rognli O.A."/>
            <person name="Daniell H."/>
            <person name="Clarke J.L."/>
        </authorList>
    </citation>
    <scope>NUCLEOTIDE SEQUENCE [LARGE SCALE GENOMIC DNA]</scope>
    <source>
        <strain>cv. Penn A-4</strain>
    </source>
</reference>
<organism>
    <name type="scientific">Agrostis stolonifera</name>
    <name type="common">Creeping bentgrass</name>
    <dbReference type="NCBI Taxonomy" id="63632"/>
    <lineage>
        <taxon>Eukaryota</taxon>
        <taxon>Viridiplantae</taxon>
        <taxon>Streptophyta</taxon>
        <taxon>Embryophyta</taxon>
        <taxon>Tracheophyta</taxon>
        <taxon>Spermatophyta</taxon>
        <taxon>Magnoliopsida</taxon>
        <taxon>Liliopsida</taxon>
        <taxon>Poales</taxon>
        <taxon>Poaceae</taxon>
        <taxon>BOP clade</taxon>
        <taxon>Pooideae</taxon>
        <taxon>Poodae</taxon>
        <taxon>Poeae</taxon>
        <taxon>Poeae Chloroplast Group 1 (Aveneae type)</taxon>
        <taxon>Agrostidodinae</taxon>
        <taxon>Agrostidinae</taxon>
        <taxon>Agrostis</taxon>
    </lineage>
</organism>